<feature type="chain" id="PRO_1000072502" description="ATP synthase epsilon chain">
    <location>
        <begin position="1"/>
        <end position="138"/>
    </location>
</feature>
<evidence type="ECO:0000255" key="1">
    <source>
        <dbReference type="HAMAP-Rule" id="MF_00530"/>
    </source>
</evidence>
<keyword id="KW-0066">ATP synthesis</keyword>
<keyword id="KW-0997">Cell inner membrane</keyword>
<keyword id="KW-1003">Cell membrane</keyword>
<keyword id="KW-0139">CF(1)</keyword>
<keyword id="KW-0375">Hydrogen ion transport</keyword>
<keyword id="KW-0406">Ion transport</keyword>
<keyword id="KW-0472">Membrane</keyword>
<keyword id="KW-0813">Transport</keyword>
<comment type="function">
    <text evidence="1">Produces ATP from ADP in the presence of a proton gradient across the membrane.</text>
</comment>
<comment type="subunit">
    <text evidence="1">F-type ATPases have 2 components, CF(1) - the catalytic core - and CF(0) - the membrane proton channel. CF(1) has five subunits: alpha(3), beta(3), gamma(1), delta(1), epsilon(1). CF(0) has three main subunits: a, b and c.</text>
</comment>
<comment type="subcellular location">
    <subcellularLocation>
        <location evidence="1">Cell inner membrane</location>
        <topology evidence="1">Peripheral membrane protein</topology>
    </subcellularLocation>
</comment>
<comment type="similarity">
    <text evidence="1">Belongs to the ATPase epsilon chain family.</text>
</comment>
<gene>
    <name evidence="1" type="primary">atpC</name>
    <name type="ordered locus">PsycPRwf_0194</name>
</gene>
<name>ATPE_PSYWF</name>
<sequence>MATLQCRVVSAREEIYAGEISMLIATGSEGEVGILAGHTPLITLLKPGSMRIQTPDGNEEVIYVSGGVLEVQPKLVTVLADTAVRAHDLDEAKIVEARKKAEQMLANQTETLQTNAALASLAESVAQLQTIRKYRNRA</sequence>
<proteinExistence type="inferred from homology"/>
<organism>
    <name type="scientific">Psychrobacter sp. (strain PRwf-1)</name>
    <dbReference type="NCBI Taxonomy" id="349106"/>
    <lineage>
        <taxon>Bacteria</taxon>
        <taxon>Pseudomonadati</taxon>
        <taxon>Pseudomonadota</taxon>
        <taxon>Gammaproteobacteria</taxon>
        <taxon>Moraxellales</taxon>
        <taxon>Moraxellaceae</taxon>
        <taxon>Psychrobacter</taxon>
    </lineage>
</organism>
<dbReference type="EMBL" id="CP000713">
    <property type="protein sequence ID" value="ABQ93153.1"/>
    <property type="molecule type" value="Genomic_DNA"/>
</dbReference>
<dbReference type="SMR" id="A5WBW2"/>
<dbReference type="STRING" id="349106.PsycPRwf_0194"/>
<dbReference type="KEGG" id="prw:PsycPRwf_0194"/>
<dbReference type="eggNOG" id="COG0355">
    <property type="taxonomic scope" value="Bacteria"/>
</dbReference>
<dbReference type="HOGENOM" id="CLU_084338_2_0_6"/>
<dbReference type="GO" id="GO:0005886">
    <property type="term" value="C:plasma membrane"/>
    <property type="evidence" value="ECO:0007669"/>
    <property type="project" value="UniProtKB-SubCell"/>
</dbReference>
<dbReference type="GO" id="GO:0045259">
    <property type="term" value="C:proton-transporting ATP synthase complex"/>
    <property type="evidence" value="ECO:0007669"/>
    <property type="project" value="UniProtKB-KW"/>
</dbReference>
<dbReference type="GO" id="GO:0005524">
    <property type="term" value="F:ATP binding"/>
    <property type="evidence" value="ECO:0007669"/>
    <property type="project" value="UniProtKB-UniRule"/>
</dbReference>
<dbReference type="GO" id="GO:0046933">
    <property type="term" value="F:proton-transporting ATP synthase activity, rotational mechanism"/>
    <property type="evidence" value="ECO:0007669"/>
    <property type="project" value="UniProtKB-UniRule"/>
</dbReference>
<dbReference type="CDD" id="cd12152">
    <property type="entry name" value="F1-ATPase_delta"/>
    <property type="match status" value="1"/>
</dbReference>
<dbReference type="FunFam" id="2.60.15.10:FF:000001">
    <property type="entry name" value="ATP synthase epsilon chain"/>
    <property type="match status" value="1"/>
</dbReference>
<dbReference type="Gene3D" id="1.20.5.440">
    <property type="entry name" value="ATP synthase delta/epsilon subunit, C-terminal domain"/>
    <property type="match status" value="1"/>
</dbReference>
<dbReference type="Gene3D" id="2.60.15.10">
    <property type="entry name" value="F0F1 ATP synthase delta/epsilon subunit, N-terminal"/>
    <property type="match status" value="1"/>
</dbReference>
<dbReference type="HAMAP" id="MF_00530">
    <property type="entry name" value="ATP_synth_epsil_bac"/>
    <property type="match status" value="1"/>
</dbReference>
<dbReference type="InterPro" id="IPR036794">
    <property type="entry name" value="ATP_F1_dsu/esu_C_sf"/>
</dbReference>
<dbReference type="InterPro" id="IPR001469">
    <property type="entry name" value="ATP_synth_F1_dsu/esu"/>
</dbReference>
<dbReference type="InterPro" id="IPR020546">
    <property type="entry name" value="ATP_synth_F1_dsu/esu_N"/>
</dbReference>
<dbReference type="InterPro" id="IPR036771">
    <property type="entry name" value="ATPsynth_dsu/esu_N"/>
</dbReference>
<dbReference type="NCBIfam" id="TIGR01216">
    <property type="entry name" value="ATP_synt_epsi"/>
    <property type="match status" value="1"/>
</dbReference>
<dbReference type="NCBIfam" id="NF001847">
    <property type="entry name" value="PRK00571.1-4"/>
    <property type="match status" value="1"/>
</dbReference>
<dbReference type="PANTHER" id="PTHR13822">
    <property type="entry name" value="ATP SYNTHASE DELTA/EPSILON CHAIN"/>
    <property type="match status" value="1"/>
</dbReference>
<dbReference type="PANTHER" id="PTHR13822:SF10">
    <property type="entry name" value="ATP SYNTHASE EPSILON CHAIN, CHLOROPLASTIC"/>
    <property type="match status" value="1"/>
</dbReference>
<dbReference type="Pfam" id="PF02823">
    <property type="entry name" value="ATP-synt_DE_N"/>
    <property type="match status" value="1"/>
</dbReference>
<dbReference type="SUPFAM" id="SSF46604">
    <property type="entry name" value="Epsilon subunit of F1F0-ATP synthase C-terminal domain"/>
    <property type="match status" value="1"/>
</dbReference>
<dbReference type="SUPFAM" id="SSF51344">
    <property type="entry name" value="Epsilon subunit of F1F0-ATP synthase N-terminal domain"/>
    <property type="match status" value="1"/>
</dbReference>
<protein>
    <recommendedName>
        <fullName evidence="1">ATP synthase epsilon chain</fullName>
    </recommendedName>
    <alternativeName>
        <fullName evidence="1">ATP synthase F1 sector epsilon subunit</fullName>
    </alternativeName>
    <alternativeName>
        <fullName evidence="1">F-ATPase epsilon subunit</fullName>
    </alternativeName>
</protein>
<accession>A5WBW2</accession>
<reference key="1">
    <citation type="submission" date="2007-05" db="EMBL/GenBank/DDBJ databases">
        <title>Complete sequence of chromosome of Psychrobacter sp. PRwf-1.</title>
        <authorList>
            <consortium name="US DOE Joint Genome Institute"/>
            <person name="Copeland A."/>
            <person name="Lucas S."/>
            <person name="Lapidus A."/>
            <person name="Barry K."/>
            <person name="Detter J.C."/>
            <person name="Glavina del Rio T."/>
            <person name="Hammon N."/>
            <person name="Israni S."/>
            <person name="Dalin E."/>
            <person name="Tice H."/>
            <person name="Pitluck S."/>
            <person name="Chain P."/>
            <person name="Malfatti S."/>
            <person name="Shin M."/>
            <person name="Vergez L."/>
            <person name="Schmutz J."/>
            <person name="Larimer F."/>
            <person name="Land M."/>
            <person name="Hauser L."/>
            <person name="Kyrpides N."/>
            <person name="Kim E."/>
            <person name="Tiedje J."/>
            <person name="Richardson P."/>
        </authorList>
    </citation>
    <scope>NUCLEOTIDE SEQUENCE [LARGE SCALE GENOMIC DNA]</scope>
    <source>
        <strain>PRwf-1</strain>
    </source>
</reference>